<evidence type="ECO:0000255" key="1">
    <source>
        <dbReference type="HAMAP-Rule" id="MF_00258"/>
    </source>
</evidence>
<name>MURI_STAA2</name>
<organism>
    <name type="scientific">Staphylococcus aureus (strain JH1)</name>
    <dbReference type="NCBI Taxonomy" id="359787"/>
    <lineage>
        <taxon>Bacteria</taxon>
        <taxon>Bacillati</taxon>
        <taxon>Bacillota</taxon>
        <taxon>Bacilli</taxon>
        <taxon>Bacillales</taxon>
        <taxon>Staphylococcaceae</taxon>
        <taxon>Staphylococcus</taxon>
    </lineage>
</organism>
<proteinExistence type="inferred from homology"/>
<accession>A6U0W7</accession>
<comment type="function">
    <text evidence="1">Provides the (R)-glutamate required for cell wall biosynthesis.</text>
</comment>
<comment type="catalytic activity">
    <reaction evidence="1">
        <text>L-glutamate = D-glutamate</text>
        <dbReference type="Rhea" id="RHEA:12813"/>
        <dbReference type="ChEBI" id="CHEBI:29985"/>
        <dbReference type="ChEBI" id="CHEBI:29986"/>
        <dbReference type="EC" id="5.1.1.3"/>
    </reaction>
</comment>
<comment type="pathway">
    <text evidence="1">Cell wall biogenesis; peptidoglycan biosynthesis.</text>
</comment>
<comment type="similarity">
    <text evidence="1">Belongs to the aspartate/glutamate racemases family.</text>
</comment>
<keyword id="KW-0133">Cell shape</keyword>
<keyword id="KW-0961">Cell wall biogenesis/degradation</keyword>
<keyword id="KW-0413">Isomerase</keyword>
<keyword id="KW-0573">Peptidoglycan synthesis</keyword>
<feature type="chain" id="PRO_1000078576" description="Glutamate racemase">
    <location>
        <begin position="1"/>
        <end position="266"/>
    </location>
</feature>
<feature type="active site" description="Proton donor/acceptor" evidence="1">
    <location>
        <position position="72"/>
    </location>
</feature>
<feature type="active site" description="Proton donor/acceptor" evidence="1">
    <location>
        <position position="184"/>
    </location>
</feature>
<feature type="binding site" evidence="1">
    <location>
        <begin position="9"/>
        <end position="10"/>
    </location>
    <ligand>
        <name>substrate</name>
    </ligand>
</feature>
<feature type="binding site" evidence="1">
    <location>
        <begin position="41"/>
        <end position="42"/>
    </location>
    <ligand>
        <name>substrate</name>
    </ligand>
</feature>
<feature type="binding site" evidence="1">
    <location>
        <begin position="73"/>
        <end position="74"/>
    </location>
    <ligand>
        <name>substrate</name>
    </ligand>
</feature>
<feature type="binding site" evidence="1">
    <location>
        <begin position="185"/>
        <end position="186"/>
    </location>
    <ligand>
        <name>substrate</name>
    </ligand>
</feature>
<dbReference type="EC" id="5.1.1.3" evidence="1"/>
<dbReference type="EMBL" id="CP000736">
    <property type="protein sequence ID" value="ABR52085.1"/>
    <property type="molecule type" value="Genomic_DNA"/>
</dbReference>
<dbReference type="SMR" id="A6U0W7"/>
<dbReference type="KEGG" id="sah:SaurJH1_1231"/>
<dbReference type="HOGENOM" id="CLU_052344_0_2_9"/>
<dbReference type="UniPathway" id="UPA00219"/>
<dbReference type="GO" id="GO:0008881">
    <property type="term" value="F:glutamate racemase activity"/>
    <property type="evidence" value="ECO:0007669"/>
    <property type="project" value="UniProtKB-UniRule"/>
</dbReference>
<dbReference type="GO" id="GO:0071555">
    <property type="term" value="P:cell wall organization"/>
    <property type="evidence" value="ECO:0007669"/>
    <property type="project" value="UniProtKB-KW"/>
</dbReference>
<dbReference type="GO" id="GO:0009252">
    <property type="term" value="P:peptidoglycan biosynthetic process"/>
    <property type="evidence" value="ECO:0007669"/>
    <property type="project" value="UniProtKB-UniRule"/>
</dbReference>
<dbReference type="GO" id="GO:0008360">
    <property type="term" value="P:regulation of cell shape"/>
    <property type="evidence" value="ECO:0007669"/>
    <property type="project" value="UniProtKB-KW"/>
</dbReference>
<dbReference type="FunFam" id="3.40.50.1860:FF:000002">
    <property type="entry name" value="Glutamate racemase"/>
    <property type="match status" value="1"/>
</dbReference>
<dbReference type="Gene3D" id="3.40.50.1860">
    <property type="match status" value="2"/>
</dbReference>
<dbReference type="HAMAP" id="MF_00258">
    <property type="entry name" value="Glu_racemase"/>
    <property type="match status" value="1"/>
</dbReference>
<dbReference type="InterPro" id="IPR015942">
    <property type="entry name" value="Asp/Glu/hydantoin_racemase"/>
</dbReference>
<dbReference type="InterPro" id="IPR001920">
    <property type="entry name" value="Asp/Glu_race"/>
</dbReference>
<dbReference type="InterPro" id="IPR018187">
    <property type="entry name" value="Asp/Glu_racemase_AS_1"/>
</dbReference>
<dbReference type="InterPro" id="IPR033134">
    <property type="entry name" value="Asp/Glu_racemase_AS_2"/>
</dbReference>
<dbReference type="InterPro" id="IPR004391">
    <property type="entry name" value="Glu_race"/>
</dbReference>
<dbReference type="NCBIfam" id="TIGR00067">
    <property type="entry name" value="glut_race"/>
    <property type="match status" value="1"/>
</dbReference>
<dbReference type="NCBIfam" id="NF002035">
    <property type="entry name" value="PRK00865.1-3"/>
    <property type="match status" value="1"/>
</dbReference>
<dbReference type="PANTHER" id="PTHR21198">
    <property type="entry name" value="GLUTAMATE RACEMASE"/>
    <property type="match status" value="1"/>
</dbReference>
<dbReference type="PANTHER" id="PTHR21198:SF2">
    <property type="entry name" value="GLUTAMATE RACEMASE"/>
    <property type="match status" value="1"/>
</dbReference>
<dbReference type="Pfam" id="PF01177">
    <property type="entry name" value="Asp_Glu_race"/>
    <property type="match status" value="1"/>
</dbReference>
<dbReference type="SUPFAM" id="SSF53681">
    <property type="entry name" value="Aspartate/glutamate racemase"/>
    <property type="match status" value="2"/>
</dbReference>
<dbReference type="PROSITE" id="PS00923">
    <property type="entry name" value="ASP_GLU_RACEMASE_1"/>
    <property type="match status" value="1"/>
</dbReference>
<dbReference type="PROSITE" id="PS00924">
    <property type="entry name" value="ASP_GLU_RACEMASE_2"/>
    <property type="match status" value="1"/>
</dbReference>
<reference key="1">
    <citation type="submission" date="2007-06" db="EMBL/GenBank/DDBJ databases">
        <title>Complete sequence of chromosome of Staphylococcus aureus subsp. aureus JH1.</title>
        <authorList>
            <consortium name="US DOE Joint Genome Institute"/>
            <person name="Copeland A."/>
            <person name="Lucas S."/>
            <person name="Lapidus A."/>
            <person name="Barry K."/>
            <person name="Detter J.C."/>
            <person name="Glavina del Rio T."/>
            <person name="Hammon N."/>
            <person name="Israni S."/>
            <person name="Dalin E."/>
            <person name="Tice H."/>
            <person name="Pitluck S."/>
            <person name="Chain P."/>
            <person name="Malfatti S."/>
            <person name="Shin M."/>
            <person name="Vergez L."/>
            <person name="Schmutz J."/>
            <person name="Larimer F."/>
            <person name="Land M."/>
            <person name="Hauser L."/>
            <person name="Kyrpides N."/>
            <person name="Ivanova N."/>
            <person name="Tomasz A."/>
            <person name="Richardson P."/>
        </authorList>
    </citation>
    <scope>NUCLEOTIDE SEQUENCE [LARGE SCALE GENOMIC DNA]</scope>
    <source>
        <strain>JH1</strain>
    </source>
</reference>
<protein>
    <recommendedName>
        <fullName evidence="1">Glutamate racemase</fullName>
        <ecNumber evidence="1">5.1.1.3</ecNumber>
    </recommendedName>
</protein>
<sequence>MNKPIGVIDSGVGGLTVAKEIMRQLPNETIYYLGDIGRCPYGPRPGEQVKQYTVEIARKLMEFDIKMLVIACNTATAVALEYLQKTLSIPVIGVIEPGARTAIMTTRNQNVLVLGTEGTIKSEAYRTHIKRINPHVEVHGVACPGFVPLVEQMRYSDPTITSIVIHQTLKRWRNSESDTVILGCTHYPLLYKPIYDYFGGKKTVISSGLETAREVSALLTFSNEHASYTEHPDHRFFATGDPTHITNIIKEWLNLSVNVERISVND</sequence>
<gene>
    <name evidence="1" type="primary">murI</name>
    <name type="ordered locus">SaurJH1_1231</name>
</gene>